<name>WTR23_ARATH</name>
<proteinExistence type="evidence at transcript level"/>
<protein>
    <recommendedName>
        <fullName>WAT1-related protein At3g28130</fullName>
    </recommendedName>
</protein>
<comment type="subcellular location">
    <subcellularLocation>
        <location evidence="1">Membrane</location>
        <topology evidence="4">Multi-pass membrane protein</topology>
    </subcellularLocation>
</comment>
<comment type="alternative products">
    <event type="alternative splicing"/>
    <isoform>
        <id>Q56X95-1</id>
        <name>1</name>
        <sequence type="displayed"/>
    </isoform>
    <isoform>
        <id>Q56X95-2</id>
        <name>2</name>
        <sequence type="described" ref="VSP_045508"/>
    </isoform>
</comment>
<comment type="similarity">
    <text evidence="4">Belongs to the drug/metabolite transporter (DMT) superfamily. Plant drug/metabolite exporter (P-DME) (TC 2.A.7.4) family.</text>
</comment>
<comment type="sequence caution" evidence="4">
    <conflict type="erroneous gene model prediction">
        <sequence resource="EMBL-CDS" id="BAB01133"/>
    </conflict>
</comment>
<reference key="1">
    <citation type="journal article" date="2000" name="DNA Res.">
        <title>Structural analysis of Arabidopsis thaliana chromosome 3. II. Sequence features of the 4,251,695 bp regions covered by 90 P1, TAC and BAC clones.</title>
        <authorList>
            <person name="Kaneko T."/>
            <person name="Katoh T."/>
            <person name="Sato S."/>
            <person name="Nakamura Y."/>
            <person name="Asamizu E."/>
            <person name="Tabata S."/>
        </authorList>
    </citation>
    <scope>NUCLEOTIDE SEQUENCE [LARGE SCALE GENOMIC DNA]</scope>
    <source>
        <strain>cv. Columbia</strain>
    </source>
</reference>
<reference key="2">
    <citation type="journal article" date="2017" name="Plant J.">
        <title>Araport11: a complete reannotation of the Arabidopsis thaliana reference genome.</title>
        <authorList>
            <person name="Cheng C.Y."/>
            <person name="Krishnakumar V."/>
            <person name="Chan A.P."/>
            <person name="Thibaud-Nissen F."/>
            <person name="Schobel S."/>
            <person name="Town C.D."/>
        </authorList>
    </citation>
    <scope>GENOME REANNOTATION</scope>
    <source>
        <strain>cv. Columbia</strain>
    </source>
</reference>
<reference key="3">
    <citation type="journal article" date="2003" name="Science">
        <title>Empirical analysis of transcriptional activity in the Arabidopsis genome.</title>
        <authorList>
            <person name="Yamada K."/>
            <person name="Lim J."/>
            <person name="Dale J.M."/>
            <person name="Chen H."/>
            <person name="Shinn P."/>
            <person name="Palm C.J."/>
            <person name="Southwick A.M."/>
            <person name="Wu H.C."/>
            <person name="Kim C.J."/>
            <person name="Nguyen M."/>
            <person name="Pham P.K."/>
            <person name="Cheuk R.F."/>
            <person name="Karlin-Newmann G."/>
            <person name="Liu S.X."/>
            <person name="Lam B."/>
            <person name="Sakano H."/>
            <person name="Wu T."/>
            <person name="Yu G."/>
            <person name="Miranda M."/>
            <person name="Quach H.L."/>
            <person name="Tripp M."/>
            <person name="Chang C.H."/>
            <person name="Lee J.M."/>
            <person name="Toriumi M.J."/>
            <person name="Chan M.M."/>
            <person name="Tang C.C."/>
            <person name="Onodera C.S."/>
            <person name="Deng J.M."/>
            <person name="Akiyama K."/>
            <person name="Ansari Y."/>
            <person name="Arakawa T."/>
            <person name="Banh J."/>
            <person name="Banno F."/>
            <person name="Bowser L."/>
            <person name="Brooks S.Y."/>
            <person name="Carninci P."/>
            <person name="Chao Q."/>
            <person name="Choy N."/>
            <person name="Enju A."/>
            <person name="Goldsmith A.D."/>
            <person name="Gurjal M."/>
            <person name="Hansen N.F."/>
            <person name="Hayashizaki Y."/>
            <person name="Johnson-Hopson C."/>
            <person name="Hsuan V.W."/>
            <person name="Iida K."/>
            <person name="Karnes M."/>
            <person name="Khan S."/>
            <person name="Koesema E."/>
            <person name="Ishida J."/>
            <person name="Jiang P.X."/>
            <person name="Jones T."/>
            <person name="Kawai J."/>
            <person name="Kamiya A."/>
            <person name="Meyers C."/>
            <person name="Nakajima M."/>
            <person name="Narusaka M."/>
            <person name="Seki M."/>
            <person name="Sakurai T."/>
            <person name="Satou M."/>
            <person name="Tamse R."/>
            <person name="Vaysberg M."/>
            <person name="Wallender E.K."/>
            <person name="Wong C."/>
            <person name="Yamamura Y."/>
            <person name="Yuan S."/>
            <person name="Shinozaki K."/>
            <person name="Davis R.W."/>
            <person name="Theologis A."/>
            <person name="Ecker J.R."/>
        </authorList>
    </citation>
    <scope>NUCLEOTIDE SEQUENCE [LARGE SCALE MRNA] (ISOFORM 2)</scope>
    <source>
        <strain>cv. Columbia</strain>
    </source>
</reference>
<reference key="4">
    <citation type="submission" date="2005-03" db="EMBL/GenBank/DDBJ databases">
        <title>Large-scale analysis of RIKEN Arabidopsis full-length (RAFL) cDNAs.</title>
        <authorList>
            <person name="Totoki Y."/>
            <person name="Seki M."/>
            <person name="Ishida J."/>
            <person name="Nakajima M."/>
            <person name="Enju A."/>
            <person name="Kamiya A."/>
            <person name="Narusaka M."/>
            <person name="Shin-i T."/>
            <person name="Nakagawa M."/>
            <person name="Sakamoto N."/>
            <person name="Oishi K."/>
            <person name="Kohara Y."/>
            <person name="Kobayashi M."/>
            <person name="Toyoda A."/>
            <person name="Sakaki Y."/>
            <person name="Sakurai T."/>
            <person name="Iida K."/>
            <person name="Akiyama K."/>
            <person name="Satou M."/>
            <person name="Toyoda T."/>
            <person name="Konagaya A."/>
            <person name="Carninci P."/>
            <person name="Kawai J."/>
            <person name="Hayashizaki Y."/>
            <person name="Shinozaki K."/>
        </authorList>
    </citation>
    <scope>NUCLEOTIDE SEQUENCE [LARGE SCALE MRNA] (ISOFORM 1)</scope>
    <source>
        <strain>cv. Columbia</strain>
    </source>
</reference>
<dbReference type="EMBL" id="AB028616">
    <property type="protein sequence ID" value="BAB01133.1"/>
    <property type="status" value="ALT_SEQ"/>
    <property type="molecule type" value="Genomic_DNA"/>
</dbReference>
<dbReference type="EMBL" id="CP002686">
    <property type="protein sequence ID" value="AEE77405.1"/>
    <property type="molecule type" value="Genomic_DNA"/>
</dbReference>
<dbReference type="EMBL" id="CP002686">
    <property type="protein sequence ID" value="AEE77406.1"/>
    <property type="molecule type" value="Genomic_DNA"/>
</dbReference>
<dbReference type="EMBL" id="CP002686">
    <property type="protein sequence ID" value="ANM63345.1"/>
    <property type="molecule type" value="Genomic_DNA"/>
</dbReference>
<dbReference type="EMBL" id="AY049278">
    <property type="protein sequence ID" value="AAK83620.1"/>
    <property type="molecule type" value="mRNA"/>
</dbReference>
<dbReference type="EMBL" id="AY129493">
    <property type="protein sequence ID" value="AAM91079.1"/>
    <property type="molecule type" value="mRNA"/>
</dbReference>
<dbReference type="EMBL" id="AK221781">
    <property type="protein sequence ID" value="BAD93900.1"/>
    <property type="molecule type" value="mRNA"/>
</dbReference>
<dbReference type="RefSeq" id="NP_001325438.1">
    <molecule id="Q56X95-2"/>
    <property type="nucleotide sequence ID" value="NM_001338945.1"/>
</dbReference>
<dbReference type="RefSeq" id="NP_566833.1">
    <molecule id="Q56X95-2"/>
    <property type="nucleotide sequence ID" value="NM_113731.2"/>
</dbReference>
<dbReference type="RefSeq" id="NP_974371.2">
    <molecule id="Q56X95-1"/>
    <property type="nucleotide sequence ID" value="NM_202642.3"/>
</dbReference>
<dbReference type="SMR" id="Q56X95"/>
<dbReference type="BioGRID" id="7766">
    <property type="interactions" value="4"/>
</dbReference>
<dbReference type="IntAct" id="Q56X95">
    <property type="interactions" value="4"/>
</dbReference>
<dbReference type="STRING" id="3702.Q56X95"/>
<dbReference type="PaxDb" id="3702-AT3G28130.2"/>
<dbReference type="EnsemblPlants" id="AT3G28130.1">
    <molecule id="Q56X95-2"/>
    <property type="protein sequence ID" value="AT3G28130.1"/>
    <property type="gene ID" value="AT3G28130"/>
</dbReference>
<dbReference type="EnsemblPlants" id="AT3G28130.2">
    <molecule id="Q56X95-1"/>
    <property type="protein sequence ID" value="AT3G28130.2"/>
    <property type="gene ID" value="AT3G28130"/>
</dbReference>
<dbReference type="EnsemblPlants" id="AT3G28130.5">
    <molecule id="Q56X95-2"/>
    <property type="protein sequence ID" value="AT3G28130.5"/>
    <property type="gene ID" value="AT3G28130"/>
</dbReference>
<dbReference type="Gramene" id="AT3G28130.1">
    <molecule id="Q56X95-2"/>
    <property type="protein sequence ID" value="AT3G28130.1"/>
    <property type="gene ID" value="AT3G28130"/>
</dbReference>
<dbReference type="Gramene" id="AT3G28130.2">
    <molecule id="Q56X95-1"/>
    <property type="protein sequence ID" value="AT3G28130.2"/>
    <property type="gene ID" value="AT3G28130"/>
</dbReference>
<dbReference type="Gramene" id="AT3G28130.5">
    <molecule id="Q56X95-2"/>
    <property type="protein sequence ID" value="AT3G28130.5"/>
    <property type="gene ID" value="AT3G28130"/>
</dbReference>
<dbReference type="KEGG" id="ath:AT3G28130"/>
<dbReference type="Araport" id="AT3G28130"/>
<dbReference type="TAIR" id="AT3G28130">
    <property type="gene designation" value="UMAMIT44"/>
</dbReference>
<dbReference type="eggNOG" id="ENOG502QRQK">
    <property type="taxonomic scope" value="Eukaryota"/>
</dbReference>
<dbReference type="HOGENOM" id="CLU_025359_0_1_1"/>
<dbReference type="InParanoid" id="Q56X95"/>
<dbReference type="OMA" id="AHIMNEY"/>
<dbReference type="PhylomeDB" id="Q56X95"/>
<dbReference type="PRO" id="PR:Q56X95"/>
<dbReference type="Proteomes" id="UP000006548">
    <property type="component" value="Chromosome 3"/>
</dbReference>
<dbReference type="ExpressionAtlas" id="Q56X95">
    <property type="expression patterns" value="baseline and differential"/>
</dbReference>
<dbReference type="GO" id="GO:0016020">
    <property type="term" value="C:membrane"/>
    <property type="evidence" value="ECO:0007669"/>
    <property type="project" value="UniProtKB-SubCell"/>
</dbReference>
<dbReference type="GO" id="GO:0022857">
    <property type="term" value="F:transmembrane transporter activity"/>
    <property type="evidence" value="ECO:0007669"/>
    <property type="project" value="InterPro"/>
</dbReference>
<dbReference type="InterPro" id="IPR000620">
    <property type="entry name" value="EamA_dom"/>
</dbReference>
<dbReference type="InterPro" id="IPR030184">
    <property type="entry name" value="WAT1-related"/>
</dbReference>
<dbReference type="PANTHER" id="PTHR31218">
    <property type="entry name" value="WAT1-RELATED PROTEIN"/>
    <property type="match status" value="1"/>
</dbReference>
<dbReference type="Pfam" id="PF00892">
    <property type="entry name" value="EamA"/>
    <property type="match status" value="2"/>
</dbReference>
<dbReference type="SUPFAM" id="SSF103481">
    <property type="entry name" value="Multidrug resistance efflux transporter EmrE"/>
    <property type="match status" value="2"/>
</dbReference>
<gene>
    <name type="ordered locus">At3g28130</name>
    <name type="ORF">MMG15.14</name>
</gene>
<evidence type="ECO:0000250" key="1"/>
<evidence type="ECO:0000255" key="2"/>
<evidence type="ECO:0000303" key="3">
    <source>
    </source>
</evidence>
<evidence type="ECO:0000305" key="4"/>
<accession>Q56X95</accession>
<accession>Q3EAY6</accession>
<accession>Q94A83</accession>
<accession>Q9LRS4</accession>
<feature type="chain" id="PRO_0000421331" description="WAT1-related protein At3g28130">
    <location>
        <begin position="1"/>
        <end position="355"/>
    </location>
</feature>
<feature type="transmembrane region" description="Helical" evidence="2">
    <location>
        <begin position="11"/>
        <end position="31"/>
    </location>
</feature>
<feature type="transmembrane region" description="Helical" evidence="2">
    <location>
        <begin position="42"/>
        <end position="62"/>
    </location>
</feature>
<feature type="transmembrane region" description="Helical" evidence="2">
    <location>
        <begin position="80"/>
        <end position="100"/>
    </location>
</feature>
<feature type="transmembrane region" description="Helical" evidence="2">
    <location>
        <begin position="104"/>
        <end position="124"/>
    </location>
</feature>
<feature type="transmembrane region" description="Helical" evidence="2">
    <location>
        <begin position="136"/>
        <end position="156"/>
    </location>
</feature>
<feature type="transmembrane region" description="Helical" evidence="2">
    <location>
        <begin position="186"/>
        <end position="206"/>
    </location>
</feature>
<feature type="transmembrane region" description="Helical" evidence="2">
    <location>
        <begin position="218"/>
        <end position="238"/>
    </location>
</feature>
<feature type="transmembrane region" description="Helical" evidence="2">
    <location>
        <begin position="244"/>
        <end position="264"/>
    </location>
</feature>
<feature type="transmembrane region" description="Helical" evidence="2">
    <location>
        <begin position="290"/>
        <end position="310"/>
    </location>
</feature>
<feature type="transmembrane region" description="Helical" evidence="2">
    <location>
        <begin position="311"/>
        <end position="331"/>
    </location>
</feature>
<feature type="domain" description="EamA">
    <location>
        <begin position="29"/>
        <end position="154"/>
    </location>
</feature>
<feature type="splice variant" id="VSP_045508" description="In isoform 2." evidence="3">
    <original>MASITLRRRDAVLLTAMLATETGNVAMNTLFKAATSKGLNSYTFLIYSYLIGSIVLLPSHIFSYRSRSLPSLSLSILCKIGVLGLLG</original>
    <variation>M</variation>
    <location>
        <begin position="1"/>
        <end position="87"/>
    </location>
</feature>
<keyword id="KW-0025">Alternative splicing</keyword>
<keyword id="KW-0472">Membrane</keyword>
<keyword id="KW-1185">Reference proteome</keyword>
<keyword id="KW-0812">Transmembrane</keyword>
<keyword id="KW-1133">Transmembrane helix</keyword>
<organism>
    <name type="scientific">Arabidopsis thaliana</name>
    <name type="common">Mouse-ear cress</name>
    <dbReference type="NCBI Taxonomy" id="3702"/>
    <lineage>
        <taxon>Eukaryota</taxon>
        <taxon>Viridiplantae</taxon>
        <taxon>Streptophyta</taxon>
        <taxon>Embryophyta</taxon>
        <taxon>Tracheophyta</taxon>
        <taxon>Spermatophyta</taxon>
        <taxon>Magnoliopsida</taxon>
        <taxon>eudicotyledons</taxon>
        <taxon>Gunneridae</taxon>
        <taxon>Pentapetalae</taxon>
        <taxon>rosids</taxon>
        <taxon>malvids</taxon>
        <taxon>Brassicales</taxon>
        <taxon>Brassicaceae</taxon>
        <taxon>Camelineae</taxon>
        <taxon>Arabidopsis</taxon>
    </lineage>
</organism>
<sequence length="355" mass="38686">MASITLRRRDAVLLTAMLATETGNVAMNTLFKAATSKGLNSYTFLIYSYLIGSIVLLPSHIFSYRSRSLPSLSLSILCKIGVLGLLGSTYLITGFIGIEYSNPTLASAISNINPAITFILAIIFRMEKASFKEKSSVAKMVGTIVSLVGALVVVLYHGPRVFTPSSPPFPQLRQLLLPLSSSNSDWIIGGCLLAIKDTLVPVAFILQAHIMKLYPAPFTVSFFYFLIASILTSLIGIVAEKNNPSIWIIHFDITLVCIVVGGIFNPGYYAIHLWAVRNKGPVYLAIFRPLSILIAVIMGAIFLGDSFYLGSLVGGILISLGFYTVMWGKAKEGKTQFLSLSEETPLLDENIDDRI</sequence>